<protein>
    <recommendedName>
        <fullName>Spermine oxidase</fullName>
        <ecNumber evidence="3 5">1.5.3.16</ecNumber>
    </recommendedName>
    <alternativeName>
        <fullName>Polyamine oxidase 1</fullName>
        <shortName>PAO-1</shortName>
        <shortName>PAOh1</shortName>
    </alternativeName>
</protein>
<sequence>MQSCESSGDSADDPLSRGLRRRGQPRVVVIGAGLAGLAAAKALLEQGFTDVTVLEASSHIGGRVQSVKLGHATFELGATWIHGSHGNPIYHLAEANGLLEETTDGERSVGRISLYSKNGVACYLTNHGRRIPKDVVEEFSDLYNEVYNLTQEFFRHDKPVNAESQNSVGVFTREEVRNRIRNDPDDPEATKRLKLAMIQQYLKVESCESSSHSMDEVSLSAFGEWTEIPGAHHIIPSGFMRVVELLAEGIPAHVIQLGKPVRCIHWDQASARPRGPEIEPRGEGDHNHDTGEGGQGGEEPRGGRWDEDEQWSVVVECEDCELIPADHVIVTVSLGVLKRQYTSFFRPGLPTEKVAAIHRLGIGTTDKIFLEFEEPFWGPECNSLQFVWEDEAESHTLTYPPELWYRKICGFDVLYPPERYGHVLSGWICGEEALVMEKCDDEAVAEICTEMLRQFTGNPNIPKPRRILRSAWGSNPYFRGSYSYTQVGSSGADVEKLAKPLPYTESSKTAPMQVLFSGEATHRKYYSTTHGALLSGQREAARLIEMYRDLFQQGT</sequence>
<comment type="function">
    <text>Flavoenzyme which catalyzes the oxidation of spermine to spermidine. Can also use N(1)-acetylspermine and spermidine as substrates, with different affinity depending on the isoform (isozyme) and on the experimental conditions. Plays an important role in the regulation of polyamine intracellular concentration and has the potential to act as a determinant of cellular sensitivity to the antitumor polyamine analogs. May contribute to beta-alanine production via aldehyde dehydrogenase conversion of 3-amino-propanal.</text>
</comment>
<comment type="catalytic activity">
    <reaction evidence="3 4 5">
        <text>spermine + O2 + H2O = 3-aminopropanal + spermidine + H2O2</text>
        <dbReference type="Rhea" id="RHEA:25804"/>
        <dbReference type="ChEBI" id="CHEBI:15377"/>
        <dbReference type="ChEBI" id="CHEBI:15379"/>
        <dbReference type="ChEBI" id="CHEBI:16240"/>
        <dbReference type="ChEBI" id="CHEBI:45725"/>
        <dbReference type="ChEBI" id="CHEBI:57834"/>
        <dbReference type="ChEBI" id="CHEBI:58374"/>
        <dbReference type="EC" id="1.5.3.16"/>
    </reaction>
</comment>
<comment type="cofactor">
    <cofactor evidence="1">
        <name>FAD</name>
        <dbReference type="ChEBI" id="CHEBI:57692"/>
    </cofactor>
    <text evidence="1">Binds 1 FAD per subunit.</text>
</comment>
<comment type="activity regulation">
    <text>Inhibited at more than 90% by SL-11144, SL-11150 and SL-11158, at concentrations less than 1 uM.</text>
</comment>
<comment type="biophysicochemical properties">
    <kinetics>
        <KM evidence="4 5 8">0.6 uM for spermine (isoform 1)</KM>
        <KM evidence="4 5 8">0.5 uM for spermine (isoform 6)</KM>
        <KM evidence="4 5 8">3 uM for N1-acetylspermine (Isoform 1 and isoform 6)</KM>
        <text>kcat is 27-fold higher with spermine than N1-acetylspermine as substrate for isoform 1 and isoform 6.</text>
    </kinetics>
    <phDependence>
        <text evidence="4 5 8">Optimum pH is 9.5 with spermine as substrate.</text>
    </phDependence>
</comment>
<comment type="pathway">
    <text evidence="5">Amine and polyamine degradation; spermine degradation.</text>
</comment>
<comment type="subcellular location">
    <molecule>Isoform 1</molecule>
    <subcellularLocation>
        <location>Cytoplasm</location>
    </subcellularLocation>
    <subcellularLocation>
        <location>Nucleus</location>
    </subcellularLocation>
</comment>
<comment type="subcellular location">
    <molecule>Isoform 4</molecule>
    <subcellularLocation>
        <location>Cytoplasm</location>
    </subcellularLocation>
    <subcellularLocation>
        <location>Nucleus</location>
    </subcellularLocation>
</comment>
<comment type="subcellular location">
    <molecule>Isoform 6</molecule>
    <subcellularLocation>
        <location>Cytoplasm</location>
    </subcellularLocation>
    <subcellularLocation>
        <location>Nucleus</location>
    </subcellularLocation>
</comment>
<comment type="alternative products">
    <event type="alternative splicing"/>
    <isoform>
        <id>Q9NWM0-1</id>
        <name>1</name>
        <name>PAOh1</name>
        <name>SMO</name>
        <sequence type="displayed"/>
    </isoform>
    <isoform>
        <id>Q9NWM0-2</id>
        <name>2</name>
        <name>PAOh2</name>
        <sequence type="described" ref="VSP_011125"/>
    </isoform>
    <isoform>
        <id>Q9NWM0-3</id>
        <name>3</name>
        <name>PAOh3</name>
        <sequence type="described" ref="VSP_011124"/>
    </isoform>
    <isoform>
        <id>Q9NWM0-4</id>
        <name>4</name>
        <name>PAOh4</name>
        <sequence type="described" ref="VSP_011125 VSP_011126"/>
    </isoform>
    <isoform>
        <id>Q9NWM0-5</id>
        <name>5</name>
        <sequence type="described" ref="VSP_011123 VSP_011126"/>
    </isoform>
    <isoform>
        <id>Q9NWM0-6</id>
        <name>6</name>
        <name>SMO5</name>
        <name>SMOX5</name>
        <sequence type="described" ref="VSP_011126"/>
    </isoform>
    <text>The resultant proteins have different biochemical characteristics and substrate specificity.</text>
</comment>
<comment type="tissue specificity">
    <text evidence="8">Widely expressed. Expressed in human tumor cell lines. Isoform 4 is only found in an embryonal kidney cell line.</text>
</comment>
<comment type="induction">
    <text>By antitumor polyamine analogs.</text>
</comment>
<comment type="miscellaneous">
    <molecule>Isoform 1</molecule>
    <text>Low affinity for acetylated polyamine.</text>
</comment>
<comment type="miscellaneous">
    <molecule>Isoform 2</molecule>
    <text evidence="13">Low affinity for acetylated polyamine.</text>
</comment>
<comment type="miscellaneous">
    <molecule>Isoform 3</molecule>
    <text evidence="13">Major isoform. Has the highest affinity for the 3 substrates. Has a greater affinity for spermidine and spermine than for N(1)-acetylspermine.</text>
</comment>
<comment type="miscellaneous">
    <molecule>Isoform 4</molecule>
    <text evidence="13">Has the lowest Km values for the different substrates and has the highest affinity for spermidine.</text>
</comment>
<comment type="miscellaneous">
    <molecule>Isoform 5</molecule>
    <text evidence="13">Does not seem to display oxidase activity towards spermidine or N(1)-acetyl-spermine, but this has to be confirmed.</text>
</comment>
<comment type="miscellaneous">
    <molecule>Isoform 6</molecule>
    <text evidence="13">Substrate specificities and affinities comparable to those of isoform 1.</text>
</comment>
<comment type="similarity">
    <text evidence="13">Belongs to the flavin monoamine oxidase family.</text>
</comment>
<proteinExistence type="evidence at protein level"/>
<accession>Q9NWM0</accession>
<accession>A2A2P5</accession>
<accession>A2A2P6</accession>
<accession>A8BE87</accession>
<accession>D3DVZ4</accession>
<accession>Q5TE26</accession>
<accession>Q5TE27</accession>
<accession>Q6UY28</accession>
<accession>Q8IX00</accession>
<accession>Q96LC3</accession>
<accession>Q96LC4</accession>
<accession>Q96QT3</accession>
<accession>Q9BW38</accession>
<accession>Q9H6H1</accession>
<accession>Q9NP51</accession>
<accession>Q9NPY1</accession>
<accession>Q9NPY2</accession>
<evidence type="ECO:0000250" key="1">
    <source>
        <dbReference type="UniProtKB" id="Q8C0L6"/>
    </source>
</evidence>
<evidence type="ECO:0000256" key="2">
    <source>
        <dbReference type="SAM" id="MobiDB-lite"/>
    </source>
</evidence>
<evidence type="ECO:0000269" key="3">
    <source>
    </source>
</evidence>
<evidence type="ECO:0000269" key="4">
    <source>
    </source>
</evidence>
<evidence type="ECO:0000269" key="5">
    <source>
    </source>
</evidence>
<evidence type="ECO:0000269" key="6">
    <source>
    </source>
</evidence>
<evidence type="ECO:0000269" key="7">
    <source>
    </source>
</evidence>
<evidence type="ECO:0000269" key="8">
    <source>
    </source>
</evidence>
<evidence type="ECO:0000303" key="9">
    <source>
    </source>
</evidence>
<evidence type="ECO:0000303" key="10">
    <source>
    </source>
</evidence>
<evidence type="ECO:0000303" key="11">
    <source>
    </source>
</evidence>
<evidence type="ECO:0000303" key="12">
    <source>
    </source>
</evidence>
<evidence type="ECO:0000305" key="13"/>
<evidence type="ECO:0007829" key="14">
    <source>
        <dbReference type="PDB" id="7OY0"/>
    </source>
</evidence>
<gene>
    <name type="primary">SMOX</name>
    <name type="synonym">C20orf16</name>
    <name type="synonym">SMO</name>
    <name type="ORF">UNQ3039/PRO9854</name>
</gene>
<organism>
    <name type="scientific">Homo sapiens</name>
    <name type="common">Human</name>
    <dbReference type="NCBI Taxonomy" id="9606"/>
    <lineage>
        <taxon>Eukaryota</taxon>
        <taxon>Metazoa</taxon>
        <taxon>Chordata</taxon>
        <taxon>Craniata</taxon>
        <taxon>Vertebrata</taxon>
        <taxon>Euteleostomi</taxon>
        <taxon>Mammalia</taxon>
        <taxon>Eutheria</taxon>
        <taxon>Euarchontoglires</taxon>
        <taxon>Primates</taxon>
        <taxon>Haplorrhini</taxon>
        <taxon>Catarrhini</taxon>
        <taxon>Hominidae</taxon>
        <taxon>Homo</taxon>
    </lineage>
</organism>
<name>SMOX_HUMAN</name>
<keyword id="KW-0002">3D-structure</keyword>
<keyword id="KW-0025">Alternative splicing</keyword>
<keyword id="KW-0963">Cytoplasm</keyword>
<keyword id="KW-0274">FAD</keyword>
<keyword id="KW-0285">Flavoprotein</keyword>
<keyword id="KW-0539">Nucleus</keyword>
<keyword id="KW-0560">Oxidoreductase</keyword>
<keyword id="KW-1267">Proteomics identification</keyword>
<keyword id="KW-1185">Reference proteome</keyword>
<feature type="chain" id="PRO_0000099877" description="Spermine oxidase">
    <location>
        <begin position="1"/>
        <end position="555"/>
    </location>
</feature>
<feature type="region of interest" description="Disordered" evidence="2">
    <location>
        <begin position="271"/>
        <end position="306"/>
    </location>
</feature>
<feature type="compositionally biased region" description="Basic and acidic residues" evidence="2">
    <location>
        <begin position="274"/>
        <end position="291"/>
    </location>
</feature>
<feature type="binding site" evidence="1">
    <location>
        <position position="35"/>
    </location>
    <ligand>
        <name>FAD</name>
        <dbReference type="ChEBI" id="CHEBI:57692"/>
    </ligand>
</feature>
<feature type="binding site" evidence="1">
    <location>
        <position position="55"/>
    </location>
    <ligand>
        <name>FAD</name>
        <dbReference type="ChEBI" id="CHEBI:57692"/>
    </ligand>
</feature>
<feature type="binding site" evidence="1">
    <location>
        <position position="63"/>
    </location>
    <ligand>
        <name>FAD</name>
        <dbReference type="ChEBI" id="CHEBI:57692"/>
    </ligand>
</feature>
<feature type="binding site" evidence="1">
    <location>
        <begin position="79"/>
        <end position="80"/>
    </location>
    <ligand>
        <name>FAD</name>
        <dbReference type="ChEBI" id="CHEBI:57692"/>
    </ligand>
</feature>
<feature type="binding site" evidence="1">
    <location>
        <position position="261"/>
    </location>
    <ligand>
        <name>FAD</name>
        <dbReference type="ChEBI" id="CHEBI:57692"/>
    </ligand>
</feature>
<feature type="binding site" evidence="1">
    <location>
        <position position="519"/>
    </location>
    <ligand>
        <name>FAD</name>
        <dbReference type="ChEBI" id="CHEBI:57692"/>
    </ligand>
</feature>
<feature type="binding site" evidence="1">
    <location>
        <begin position="528"/>
        <end position="529"/>
    </location>
    <ligand>
        <name>FAD</name>
        <dbReference type="ChEBI" id="CHEBI:57692"/>
    </ligand>
</feature>
<feature type="splice variant" id="VSP_011123" description="In isoform 5." evidence="10">
    <location>
        <begin position="1"/>
        <end position="196"/>
    </location>
</feature>
<feature type="splice variant" id="VSP_011124" description="In isoform 3." evidence="9">
    <location>
        <begin position="146"/>
        <end position="510"/>
    </location>
</feature>
<feature type="splice variant" id="VSP_011125" description="In isoform 2 and isoform 4." evidence="9 11">
    <location>
        <begin position="282"/>
        <end position="334"/>
    </location>
</feature>
<feature type="splice variant" id="VSP_011126" description="In isoform 4, isoform 5 and isoform 6." evidence="9 10 12">
    <original>A</original>
    <variation>AHGSSTKQQPGHLFSSKCPEQPLDANRGAVK</variation>
    <location>
        <position position="510"/>
    </location>
</feature>
<feature type="sequence variant" id="VAR_059114" description="In dbSNP:rs6084654.">
    <original>R</original>
    <variation>P</variation>
    <location>
        <position position="301"/>
    </location>
</feature>
<feature type="sequence variant" id="VAR_036546" description="In a breast cancer sample; somatic mutation." evidence="7">
    <original>Q</original>
    <variation>K</variation>
    <location>
        <position position="340"/>
    </location>
</feature>
<feature type="sequence variant" id="VAR_019531" evidence="6">
    <original>H</original>
    <variation>Y</variation>
    <location>
        <position position="522"/>
    </location>
</feature>
<feature type="mutagenesis site" description="No change in enzymatic activity." evidence="4">
    <original>C</original>
    <variation>R</variation>
    <location>
        <position position="320"/>
    </location>
</feature>
<feature type="sequence conflict" description="In Ref. 2; AAK55764." evidence="13" ref="2">
    <original>S</original>
    <variation>R</variation>
    <location>
        <position position="16"/>
    </location>
</feature>
<feature type="sequence conflict" description="In Ref. 2; AAK55765." evidence="13" ref="2">
    <original>I</original>
    <variation>V</variation>
    <location>
        <position position="60"/>
    </location>
</feature>
<feature type="sequence conflict" description="In Ref. 2; AAK55764." evidence="13" ref="2">
    <original>H</original>
    <variation>Y</variation>
    <location>
        <position position="156"/>
    </location>
</feature>
<feature type="sequence conflict" description="In Ref. 5; BAB15288." evidence="13" ref="5">
    <original>T</original>
    <variation>A</variation>
    <location>
        <position position="290"/>
    </location>
</feature>
<feature type="sequence conflict" description="In Ref. 1; AAK55763 and 3; ABM01872." evidence="13" ref="1 3">
    <original>C</original>
    <variation>R</variation>
    <location>
        <position position="320"/>
    </location>
</feature>
<feature type="sequence conflict" description="In Ref. 2; AAN77119." evidence="13" ref="2">
    <original>F</original>
    <variation>L</variation>
    <location>
        <position position="372"/>
    </location>
</feature>
<feature type="sequence conflict" description="In Ref. 2; AAN77119 and 3; ABM01872." evidence="13" ref="2 3">
    <original>E</original>
    <variation>G</variation>
    <location>
        <position position="431"/>
    </location>
</feature>
<feature type="sequence conflict" description="In Ref. 2; AAK55764." evidence="13" ref="2">
    <original>T</original>
    <variation>A</variation>
    <location>
        <position position="504"/>
    </location>
</feature>
<feature type="strand" evidence="14">
    <location>
        <begin position="27"/>
        <end position="30"/>
    </location>
</feature>
<feature type="helix" evidence="14">
    <location>
        <begin position="34"/>
        <end position="45"/>
    </location>
</feature>
<feature type="strand" evidence="14">
    <location>
        <begin position="50"/>
        <end position="54"/>
    </location>
</feature>
<feature type="strand" evidence="14">
    <location>
        <begin position="56"/>
        <end position="61"/>
    </location>
</feature>
<feature type="strand" evidence="14">
    <location>
        <begin position="66"/>
        <end position="71"/>
    </location>
</feature>
<feature type="strand" evidence="14">
    <location>
        <begin position="73"/>
        <end position="77"/>
    </location>
</feature>
<feature type="helix" evidence="14">
    <location>
        <begin position="88"/>
        <end position="95"/>
    </location>
</feature>
<feature type="strand" evidence="14">
    <location>
        <begin position="120"/>
        <end position="125"/>
    </location>
</feature>
<feature type="helix" evidence="14">
    <location>
        <begin position="133"/>
        <end position="153"/>
    </location>
</feature>
<feature type="helix" evidence="14">
    <location>
        <begin position="162"/>
        <end position="182"/>
    </location>
</feature>
<feature type="strand" evidence="14">
    <location>
        <begin position="184"/>
        <end position="186"/>
    </location>
</feature>
<feature type="helix" evidence="14">
    <location>
        <begin position="188"/>
        <end position="206"/>
    </location>
</feature>
<feature type="strand" evidence="14">
    <location>
        <begin position="214"/>
        <end position="216"/>
    </location>
</feature>
<feature type="strand" evidence="14">
    <location>
        <begin position="231"/>
        <end position="233"/>
    </location>
</feature>
<feature type="helix" evidence="14">
    <location>
        <begin position="240"/>
        <end position="247"/>
    </location>
</feature>
<feature type="turn" evidence="14">
    <location>
        <begin position="252"/>
        <end position="254"/>
    </location>
</feature>
<feature type="strand" evidence="14">
    <location>
        <begin position="255"/>
        <end position="258"/>
    </location>
</feature>
<feature type="strand" evidence="14">
    <location>
        <begin position="261"/>
        <end position="265"/>
    </location>
</feature>
<feature type="strand" evidence="14">
    <location>
        <begin position="312"/>
        <end position="317"/>
    </location>
</feature>
<feature type="strand" evidence="14">
    <location>
        <begin position="322"/>
        <end position="330"/>
    </location>
</feature>
<feature type="helix" evidence="14">
    <location>
        <begin position="334"/>
        <end position="344"/>
    </location>
</feature>
<feature type="strand" evidence="14">
    <location>
        <begin position="345"/>
        <end position="347"/>
    </location>
</feature>
<feature type="helix" evidence="14">
    <location>
        <begin position="351"/>
        <end position="359"/>
    </location>
</feature>
<feature type="strand" evidence="14">
    <location>
        <begin position="360"/>
        <end position="363"/>
    </location>
</feature>
<feature type="strand" evidence="14">
    <location>
        <begin position="365"/>
        <end position="374"/>
    </location>
</feature>
<feature type="strand" evidence="14">
    <location>
        <begin position="381"/>
        <end position="387"/>
    </location>
</feature>
<feature type="helix" evidence="14">
    <location>
        <begin position="389"/>
        <end position="391"/>
    </location>
</feature>
<feature type="helix" evidence="14">
    <location>
        <begin position="404"/>
        <end position="407"/>
    </location>
</feature>
<feature type="strand" evidence="14">
    <location>
        <begin position="410"/>
        <end position="413"/>
    </location>
</feature>
<feature type="helix" evidence="14">
    <location>
        <begin position="417"/>
        <end position="420"/>
    </location>
</feature>
<feature type="strand" evidence="14">
    <location>
        <begin position="422"/>
        <end position="430"/>
    </location>
</feature>
<feature type="helix" evidence="14">
    <location>
        <begin position="431"/>
        <end position="438"/>
    </location>
</feature>
<feature type="helix" evidence="14">
    <location>
        <begin position="441"/>
        <end position="456"/>
    </location>
</feature>
<feature type="strand" evidence="14">
    <location>
        <begin position="465"/>
        <end position="469"/>
    </location>
</feature>
<feature type="turn" evidence="14">
    <location>
        <begin position="472"/>
        <end position="474"/>
    </location>
</feature>
<feature type="turn" evidence="14">
    <location>
        <begin position="476"/>
        <end position="478"/>
    </location>
</feature>
<feature type="strand" evidence="14">
    <location>
        <begin position="479"/>
        <end position="484"/>
    </location>
</feature>
<feature type="helix" evidence="14">
    <location>
        <begin position="491"/>
        <end position="498"/>
    </location>
</feature>
<feature type="strand" evidence="14">
    <location>
        <begin position="513"/>
        <end position="516"/>
    </location>
</feature>
<feature type="helix" evidence="14">
    <location>
        <begin position="519"/>
        <end position="521"/>
    </location>
</feature>
<feature type="turn" evidence="14">
    <location>
        <begin position="523"/>
        <end position="527"/>
    </location>
</feature>
<feature type="helix" evidence="14">
    <location>
        <begin position="529"/>
        <end position="553"/>
    </location>
</feature>
<dbReference type="EC" id="1.5.3.16" evidence="3 5"/>
<dbReference type="EMBL" id="AY033889">
    <property type="protein sequence ID" value="AAK55763.1"/>
    <property type="molecule type" value="mRNA"/>
</dbReference>
<dbReference type="EMBL" id="AY033890">
    <property type="protein sequence ID" value="AAK55764.1"/>
    <property type="molecule type" value="mRNA"/>
</dbReference>
<dbReference type="EMBL" id="AY033891">
    <property type="protein sequence ID" value="AAK55765.1"/>
    <property type="molecule type" value="mRNA"/>
</dbReference>
<dbReference type="EMBL" id="AF519179">
    <property type="protein sequence ID" value="AAN77119.1"/>
    <property type="molecule type" value="mRNA"/>
</dbReference>
<dbReference type="EMBL" id="EF032141">
    <property type="protein sequence ID" value="ABM01872.1"/>
    <property type="molecule type" value="mRNA"/>
</dbReference>
<dbReference type="EMBL" id="AY358104">
    <property type="protein sequence ID" value="AAQ88471.1"/>
    <property type="molecule type" value="mRNA"/>
</dbReference>
<dbReference type="EMBL" id="AK000753">
    <property type="protein sequence ID" value="BAA91360.1"/>
    <property type="molecule type" value="mRNA"/>
</dbReference>
<dbReference type="EMBL" id="AK025938">
    <property type="protein sequence ID" value="BAB15288.1"/>
    <property type="molecule type" value="mRNA"/>
</dbReference>
<dbReference type="EMBL" id="AL121675">
    <property type="status" value="NOT_ANNOTATED_CDS"/>
    <property type="molecule type" value="Genomic_DNA"/>
</dbReference>
<dbReference type="EMBL" id="CH471133">
    <property type="protein sequence ID" value="EAX10460.1"/>
    <property type="molecule type" value="Genomic_DNA"/>
</dbReference>
<dbReference type="EMBL" id="CH471133">
    <property type="protein sequence ID" value="EAX10461.1"/>
    <property type="molecule type" value="Genomic_DNA"/>
</dbReference>
<dbReference type="EMBL" id="CH471133">
    <property type="protein sequence ID" value="EAX10457.1"/>
    <property type="molecule type" value="Genomic_DNA"/>
</dbReference>
<dbReference type="EMBL" id="CH471133">
    <property type="protein sequence ID" value="EAX10458.1"/>
    <property type="molecule type" value="Genomic_DNA"/>
</dbReference>
<dbReference type="EMBL" id="CH471133">
    <property type="protein sequence ID" value="EAX10459.1"/>
    <property type="molecule type" value="Genomic_DNA"/>
</dbReference>
<dbReference type="EMBL" id="CH471133">
    <property type="protein sequence ID" value="EAX10462.1"/>
    <property type="molecule type" value="Genomic_DNA"/>
</dbReference>
<dbReference type="EMBL" id="BC000669">
    <property type="protein sequence ID" value="AAH00669.1"/>
    <property type="molecule type" value="mRNA"/>
</dbReference>
<dbReference type="EMBL" id="AL162058">
    <property type="protein sequence ID" value="CAB82396.1"/>
    <property type="molecule type" value="mRNA"/>
</dbReference>
<dbReference type="CCDS" id="CCDS13075.1">
    <molecule id="Q9NWM0-1"/>
</dbReference>
<dbReference type="CCDS" id="CCDS13076.1">
    <molecule id="Q9NWM0-2"/>
</dbReference>
<dbReference type="CCDS" id="CCDS13077.1">
    <molecule id="Q9NWM0-3"/>
</dbReference>
<dbReference type="CCDS" id="CCDS13078.1">
    <molecule id="Q9NWM0-4"/>
</dbReference>
<dbReference type="CCDS" id="CCDS74702.1">
    <molecule id="Q9NWM0-6"/>
</dbReference>
<dbReference type="PIR" id="T47142">
    <property type="entry name" value="T47142"/>
</dbReference>
<dbReference type="RefSeq" id="NP_001257620.1">
    <molecule id="Q9NWM0-6"/>
    <property type="nucleotide sequence ID" value="NM_001270691.2"/>
</dbReference>
<dbReference type="RefSeq" id="NP_787033.1">
    <molecule id="Q9NWM0-1"/>
    <property type="nucleotide sequence ID" value="NM_175839.3"/>
</dbReference>
<dbReference type="RefSeq" id="NP_787034.1">
    <molecule id="Q9NWM0-2"/>
    <property type="nucleotide sequence ID" value="NM_175840.3"/>
</dbReference>
<dbReference type="RefSeq" id="NP_787035.1">
    <molecule id="Q9NWM0-3"/>
    <property type="nucleotide sequence ID" value="NM_175841.3"/>
</dbReference>
<dbReference type="RefSeq" id="NP_787036.1">
    <molecule id="Q9NWM0-4"/>
    <property type="nucleotide sequence ID" value="NM_175842.3"/>
</dbReference>
<dbReference type="RefSeq" id="XP_011527563.1">
    <molecule id="Q9NWM0-6"/>
    <property type="nucleotide sequence ID" value="XM_011529261.3"/>
</dbReference>
<dbReference type="RefSeq" id="XP_047296173.1">
    <molecule id="Q9NWM0-6"/>
    <property type="nucleotide sequence ID" value="XM_047440217.1"/>
</dbReference>
<dbReference type="RefSeq" id="XP_047296174.1">
    <molecule id="Q9NWM0-6"/>
    <property type="nucleotide sequence ID" value="XM_047440218.1"/>
</dbReference>
<dbReference type="RefSeq" id="XP_047296175.1">
    <molecule id="Q9NWM0-6"/>
    <property type="nucleotide sequence ID" value="XM_047440219.1"/>
</dbReference>
<dbReference type="RefSeq" id="XP_047296176.1">
    <molecule id="Q9NWM0-1"/>
    <property type="nucleotide sequence ID" value="XM_047440220.1"/>
</dbReference>
<dbReference type="RefSeq" id="XP_047296177.1">
    <molecule id="Q9NWM0-2"/>
    <property type="nucleotide sequence ID" value="XM_047440221.1"/>
</dbReference>
<dbReference type="RefSeq" id="XP_047296178.1">
    <molecule id="Q9NWM0-2"/>
    <property type="nucleotide sequence ID" value="XM_047440222.1"/>
</dbReference>
<dbReference type="RefSeq" id="XP_047296179.1">
    <molecule id="Q9NWM0-2"/>
    <property type="nucleotide sequence ID" value="XM_047440223.1"/>
</dbReference>
<dbReference type="RefSeq" id="XP_054179519.1">
    <molecule id="Q9NWM0-6"/>
    <property type="nucleotide sequence ID" value="XM_054323544.1"/>
</dbReference>
<dbReference type="RefSeq" id="XP_054179520.1">
    <molecule id="Q9NWM0-6"/>
    <property type="nucleotide sequence ID" value="XM_054323545.1"/>
</dbReference>
<dbReference type="RefSeq" id="XP_054179521.1">
    <molecule id="Q9NWM0-6"/>
    <property type="nucleotide sequence ID" value="XM_054323546.1"/>
</dbReference>
<dbReference type="RefSeq" id="XP_054179522.1">
    <molecule id="Q9NWM0-6"/>
    <property type="nucleotide sequence ID" value="XM_054323547.1"/>
</dbReference>
<dbReference type="RefSeq" id="XP_054179523.1">
    <molecule id="Q9NWM0-1"/>
    <property type="nucleotide sequence ID" value="XM_054323548.1"/>
</dbReference>
<dbReference type="RefSeq" id="XP_054179524.1">
    <molecule id="Q9NWM0-2"/>
    <property type="nucleotide sequence ID" value="XM_054323549.1"/>
</dbReference>
<dbReference type="RefSeq" id="XP_054179525.1">
    <molecule id="Q9NWM0-2"/>
    <property type="nucleotide sequence ID" value="XM_054323550.1"/>
</dbReference>
<dbReference type="RefSeq" id="XP_054179526.1">
    <molecule id="Q9NWM0-2"/>
    <property type="nucleotide sequence ID" value="XM_054323551.1"/>
</dbReference>
<dbReference type="PDB" id="7OXL">
    <property type="method" value="X-ray"/>
    <property type="resolution" value="2.40 A"/>
    <property type="chains" value="A=25-270, A=312-502, A=513-553"/>
</dbReference>
<dbReference type="PDB" id="7OY0">
    <property type="method" value="X-ray"/>
    <property type="resolution" value="2.09 A"/>
    <property type="chains" value="A=25-270, A=312-502, A=513-553"/>
</dbReference>
<dbReference type="PDBsum" id="7OXL"/>
<dbReference type="PDBsum" id="7OY0"/>
<dbReference type="SMR" id="Q9NWM0"/>
<dbReference type="BioGRID" id="119994">
    <property type="interactions" value="11"/>
</dbReference>
<dbReference type="FunCoup" id="Q9NWM0">
    <property type="interactions" value="1940"/>
</dbReference>
<dbReference type="IntAct" id="Q9NWM0">
    <property type="interactions" value="8"/>
</dbReference>
<dbReference type="STRING" id="9606.ENSP00000478305"/>
<dbReference type="BindingDB" id="Q9NWM0"/>
<dbReference type="ChEMBL" id="CHEMBL2176769"/>
<dbReference type="DrugBank" id="DB04188">
    <property type="generic name" value="MDL72527"/>
</dbReference>
<dbReference type="DrugBank" id="DB00127">
    <property type="generic name" value="Spermine"/>
</dbReference>
<dbReference type="GlyGen" id="Q9NWM0">
    <property type="glycosylation" value="1 site, 1 O-linked glycan (1 site)"/>
</dbReference>
<dbReference type="iPTMnet" id="Q9NWM0"/>
<dbReference type="PhosphoSitePlus" id="Q9NWM0"/>
<dbReference type="BioMuta" id="SMOX"/>
<dbReference type="DMDM" id="50401688"/>
<dbReference type="jPOST" id="Q9NWM0"/>
<dbReference type="MassIVE" id="Q9NWM0"/>
<dbReference type="PaxDb" id="9606-ENSP00000478305"/>
<dbReference type="PeptideAtlas" id="Q9NWM0"/>
<dbReference type="ProteomicsDB" id="82946">
    <molecule id="Q9NWM0-1"/>
</dbReference>
<dbReference type="ProteomicsDB" id="82947">
    <molecule id="Q9NWM0-2"/>
</dbReference>
<dbReference type="ProteomicsDB" id="82948">
    <molecule id="Q9NWM0-3"/>
</dbReference>
<dbReference type="ProteomicsDB" id="82949">
    <molecule id="Q9NWM0-4"/>
</dbReference>
<dbReference type="ProteomicsDB" id="82950">
    <molecule id="Q9NWM0-5"/>
</dbReference>
<dbReference type="ProteomicsDB" id="82951">
    <molecule id="Q9NWM0-6"/>
</dbReference>
<dbReference type="Antibodypedia" id="23782">
    <property type="antibodies" value="119 antibodies from 20 providers"/>
</dbReference>
<dbReference type="DNASU" id="54498"/>
<dbReference type="Ensembl" id="ENST00000278795.7">
    <molecule id="Q9NWM0-4"/>
    <property type="protein sequence ID" value="ENSP00000278795.3"/>
    <property type="gene ID" value="ENSG00000088826.18"/>
</dbReference>
<dbReference type="Ensembl" id="ENST00000305958.9">
    <molecule id="Q9NWM0-1"/>
    <property type="protein sequence ID" value="ENSP00000307252.4"/>
    <property type="gene ID" value="ENSG00000088826.18"/>
</dbReference>
<dbReference type="Ensembl" id="ENST00000339123.10">
    <molecule id="Q9NWM0-2"/>
    <property type="protein sequence ID" value="ENSP00000344595.6"/>
    <property type="gene ID" value="ENSG00000088826.18"/>
</dbReference>
<dbReference type="Ensembl" id="ENST00000346595.6">
    <molecule id="Q9NWM0-3"/>
    <property type="protein sequence ID" value="ENSP00000341775.2"/>
    <property type="gene ID" value="ENSG00000088826.18"/>
</dbReference>
<dbReference type="Ensembl" id="ENST00000379460.6">
    <molecule id="Q9NWM0-1"/>
    <property type="protein sequence ID" value="ENSP00000368773.2"/>
    <property type="gene ID" value="ENSG00000088826.18"/>
</dbReference>
<dbReference type="Ensembl" id="ENST00000621355.4">
    <molecule id="Q9NWM0-6"/>
    <property type="protein sequence ID" value="ENSP00000478305.1"/>
    <property type="gene ID" value="ENSG00000088826.18"/>
</dbReference>
<dbReference type="GeneID" id="54498"/>
<dbReference type="KEGG" id="hsa:54498"/>
<dbReference type="MANE-Select" id="ENST00000305958.9">
    <property type="protein sequence ID" value="ENSP00000307252.4"/>
    <property type="RefSeq nucleotide sequence ID" value="NM_175839.3"/>
    <property type="RefSeq protein sequence ID" value="NP_787033.1"/>
</dbReference>
<dbReference type="UCSC" id="uc002wkk.2">
    <molecule id="Q9NWM0-1"/>
    <property type="organism name" value="human"/>
</dbReference>
<dbReference type="AGR" id="HGNC:15862"/>
<dbReference type="CTD" id="54498"/>
<dbReference type="DisGeNET" id="54498"/>
<dbReference type="GeneCards" id="SMOX"/>
<dbReference type="HGNC" id="HGNC:15862">
    <property type="gene designation" value="SMOX"/>
</dbReference>
<dbReference type="HPA" id="ENSG00000088826">
    <property type="expression patterns" value="Tissue enhanced (brain)"/>
</dbReference>
<dbReference type="MIM" id="615854">
    <property type="type" value="gene"/>
</dbReference>
<dbReference type="neXtProt" id="NX_Q9NWM0"/>
<dbReference type="OpenTargets" id="ENSG00000088826"/>
<dbReference type="PharmGKB" id="PA25701"/>
<dbReference type="VEuPathDB" id="HostDB:ENSG00000088826"/>
<dbReference type="eggNOG" id="KOG0685">
    <property type="taxonomic scope" value="Eukaryota"/>
</dbReference>
<dbReference type="GeneTree" id="ENSGT00940000157511"/>
<dbReference type="HOGENOM" id="CLU_004498_2_3_1"/>
<dbReference type="InParanoid" id="Q9NWM0"/>
<dbReference type="OMA" id="CITGCHS"/>
<dbReference type="OrthoDB" id="2019015at2759"/>
<dbReference type="PAN-GO" id="Q9NWM0">
    <property type="GO annotations" value="1 GO annotation based on evolutionary models"/>
</dbReference>
<dbReference type="PhylomeDB" id="Q9NWM0"/>
<dbReference type="TreeFam" id="TF318348"/>
<dbReference type="BioCyc" id="MetaCyc:HS01609-MONOMER"/>
<dbReference type="BRENDA" id="1.5.3.16">
    <property type="organism ID" value="2681"/>
</dbReference>
<dbReference type="PathwayCommons" id="Q9NWM0"/>
<dbReference type="Reactome" id="R-HSA-141334">
    <molecule id="Q9NWM0-3"/>
    <property type="pathway name" value="PAOs oxidise polyamines to amines"/>
</dbReference>
<dbReference type="Reactome" id="R-HSA-351200">
    <molecule id="Q9NWM0-3"/>
    <property type="pathway name" value="Interconversion of polyamines"/>
</dbReference>
<dbReference type="SABIO-RK" id="Q9NWM0"/>
<dbReference type="SignaLink" id="Q9NWM0"/>
<dbReference type="UniPathway" id="UPA00211"/>
<dbReference type="BioGRID-ORCS" id="54498">
    <property type="hits" value="10 hits in 1169 CRISPR screens"/>
</dbReference>
<dbReference type="ChiTaRS" id="SMOX">
    <property type="organism name" value="human"/>
</dbReference>
<dbReference type="GeneWiki" id="SMOX"/>
<dbReference type="GenomeRNAi" id="54498"/>
<dbReference type="Pharos" id="Q9NWM0">
    <property type="development level" value="Tchem"/>
</dbReference>
<dbReference type="PRO" id="PR:Q9NWM0"/>
<dbReference type="Proteomes" id="UP000005640">
    <property type="component" value="Chromosome 20"/>
</dbReference>
<dbReference type="RNAct" id="Q9NWM0">
    <property type="molecule type" value="protein"/>
</dbReference>
<dbReference type="Bgee" id="ENSG00000088826">
    <property type="expression patterns" value="Expressed in amygdala and 174 other cell types or tissues"/>
</dbReference>
<dbReference type="ExpressionAtlas" id="Q9NWM0">
    <property type="expression patterns" value="baseline and differential"/>
</dbReference>
<dbReference type="GO" id="GO:0005737">
    <property type="term" value="C:cytoplasm"/>
    <property type="evidence" value="ECO:0000314"/>
    <property type="project" value="UniProtKB"/>
</dbReference>
<dbReference type="GO" id="GO:0005829">
    <property type="term" value="C:cytosol"/>
    <property type="evidence" value="ECO:0000314"/>
    <property type="project" value="HPA"/>
</dbReference>
<dbReference type="GO" id="GO:0043231">
    <property type="term" value="C:intracellular membrane-bounded organelle"/>
    <property type="evidence" value="ECO:0000314"/>
    <property type="project" value="HPA"/>
</dbReference>
<dbReference type="GO" id="GO:0031965">
    <property type="term" value="C:nuclear membrane"/>
    <property type="evidence" value="ECO:0000314"/>
    <property type="project" value="HPA"/>
</dbReference>
<dbReference type="GO" id="GO:0005654">
    <property type="term" value="C:nucleoplasm"/>
    <property type="evidence" value="ECO:0000314"/>
    <property type="project" value="HPA"/>
</dbReference>
<dbReference type="GO" id="GO:0005634">
    <property type="term" value="C:nucleus"/>
    <property type="evidence" value="ECO:0000314"/>
    <property type="project" value="UniProtKB"/>
</dbReference>
<dbReference type="GO" id="GO:0046592">
    <property type="term" value="F:polyamine oxidase activity"/>
    <property type="evidence" value="ECO:0000314"/>
    <property type="project" value="UniProtKB"/>
</dbReference>
<dbReference type="GO" id="GO:0052901">
    <property type="term" value="F:spermine oxidase activity"/>
    <property type="evidence" value="ECO:0000304"/>
    <property type="project" value="Reactome"/>
</dbReference>
<dbReference type="GO" id="GO:0006596">
    <property type="term" value="P:polyamine biosynthetic process"/>
    <property type="evidence" value="ECO:0000304"/>
    <property type="project" value="Reactome"/>
</dbReference>
<dbReference type="GO" id="GO:0006598">
    <property type="term" value="P:polyamine catabolic process"/>
    <property type="evidence" value="ECO:0000314"/>
    <property type="project" value="UniProtKB"/>
</dbReference>
<dbReference type="GO" id="GO:0046208">
    <property type="term" value="P:spermine catabolic process"/>
    <property type="evidence" value="ECO:0000314"/>
    <property type="project" value="UniProtKB"/>
</dbReference>
<dbReference type="GO" id="GO:0006805">
    <property type="term" value="P:xenobiotic metabolic process"/>
    <property type="evidence" value="ECO:0000304"/>
    <property type="project" value="Reactome"/>
</dbReference>
<dbReference type="FunFam" id="3.50.50.60:FF:000448">
    <property type="entry name" value="Putative polyamine oxidase 5 isoform A"/>
    <property type="match status" value="1"/>
</dbReference>
<dbReference type="FunFam" id="3.50.50.60:FF:000268">
    <property type="entry name" value="spermine oxidase isoform X2"/>
    <property type="match status" value="1"/>
</dbReference>
<dbReference type="FunFam" id="3.90.660.10:FF:000003">
    <property type="entry name" value="spermine oxidase isoform X2"/>
    <property type="match status" value="1"/>
</dbReference>
<dbReference type="FunFam" id="3.90.660.10:FF:000004">
    <property type="entry name" value="spermine oxidase isoform X2"/>
    <property type="match status" value="1"/>
</dbReference>
<dbReference type="Gene3D" id="3.90.660.10">
    <property type="match status" value="1"/>
</dbReference>
<dbReference type="Gene3D" id="3.50.50.60">
    <property type="entry name" value="FAD/NAD(P)-binding domain"/>
    <property type="match status" value="2"/>
</dbReference>
<dbReference type="InterPro" id="IPR002937">
    <property type="entry name" value="Amino_oxidase"/>
</dbReference>
<dbReference type="InterPro" id="IPR036188">
    <property type="entry name" value="FAD/NAD-bd_sf"/>
</dbReference>
<dbReference type="InterPro" id="IPR050281">
    <property type="entry name" value="Flavin_monoamine_oxidase"/>
</dbReference>
<dbReference type="PANTHER" id="PTHR10742">
    <property type="entry name" value="FLAVIN MONOAMINE OXIDASE"/>
    <property type="match status" value="1"/>
</dbReference>
<dbReference type="PANTHER" id="PTHR10742:SF416">
    <property type="entry name" value="SPERMINE OXIDASE"/>
    <property type="match status" value="1"/>
</dbReference>
<dbReference type="Pfam" id="PF01593">
    <property type="entry name" value="Amino_oxidase"/>
    <property type="match status" value="2"/>
</dbReference>
<dbReference type="PRINTS" id="PR00419">
    <property type="entry name" value="ADXRDTASE"/>
</dbReference>
<dbReference type="SUPFAM" id="SSF54373">
    <property type="entry name" value="FAD-linked reductases, C-terminal domain"/>
    <property type="match status" value="1"/>
</dbReference>
<dbReference type="SUPFAM" id="SSF51905">
    <property type="entry name" value="FAD/NAD(P)-binding domain"/>
    <property type="match status" value="1"/>
</dbReference>
<reference key="1">
    <citation type="journal article" date="2001" name="Cancer Res.">
        <title>Cloning and characterization of a human polyamine oxidase that is inducible by polyamine analogue exposure.</title>
        <authorList>
            <person name="Wang Y."/>
            <person name="Devereux W."/>
            <person name="Woster P.M."/>
            <person name="Murray-Stewart T."/>
            <person name="Hacker A."/>
            <person name="Casero R.A. Jr."/>
        </authorList>
    </citation>
    <scope>NUCLEOTIDE SEQUENCE [MRNA] (ISOFORM 1)</scope>
    <scope>CATALYTIC ACTIVITY</scope>
    <source>
        <tissue>Placenta</tissue>
    </source>
</reference>
<reference key="2">
    <citation type="journal article" date="2002" name="Biochem. J.">
        <title>Cloning and characterization of multiple human polyamine oxidase splice variants that code for isoenzymes with different biochemical characteristics.</title>
        <authorList>
            <person name="Murray-Stewart T."/>
            <person name="Wang Y."/>
            <person name="Devereux W."/>
            <person name="Casero R.A. Jr."/>
        </authorList>
    </citation>
    <scope>NUCLEOTIDE SEQUENCE [MRNA] (ISOFORMS 2; 3 AND 4)</scope>
    <scope>CATALYTIC ACTIVITY</scope>
    <scope>BIOPHYSICOCHEMICAL PROPERTIES</scope>
    <scope>PATHWAY</scope>
    <source>
        <tissue>Lung carcinoma</tissue>
    </source>
</reference>
<reference key="3">
    <citation type="journal article" date="2008" name="FEBS J.">
        <title>Nuclear localization of human spermine oxidase isoforms - possible implications in drug response and disease etiology.</title>
        <authorList>
            <person name="Murray-Stewart T."/>
            <person name="Wang Y."/>
            <person name="Goodwin A."/>
            <person name="Hacker A."/>
            <person name="Meeker A."/>
            <person name="Casero R.A. Jr."/>
        </authorList>
    </citation>
    <scope>NUCLEOTIDE SEQUENCE [MRNA] (ISOFORM 6)</scope>
    <scope>TISSUE SPECIFICITY</scope>
    <scope>SUBCELLULAR LOCATION</scope>
    <scope>BIOPHYSICOCHEMICAL PROPERTIES</scope>
</reference>
<reference key="4">
    <citation type="journal article" date="2003" name="Genome Res.">
        <title>The secreted protein discovery initiative (SPDI), a large-scale effort to identify novel human secreted and transmembrane proteins: a bioinformatics assessment.</title>
        <authorList>
            <person name="Clark H.F."/>
            <person name="Gurney A.L."/>
            <person name="Abaya E."/>
            <person name="Baker K."/>
            <person name="Baldwin D.T."/>
            <person name="Brush J."/>
            <person name="Chen J."/>
            <person name="Chow B."/>
            <person name="Chui C."/>
            <person name="Crowley C."/>
            <person name="Currell B."/>
            <person name="Deuel B."/>
            <person name="Dowd P."/>
            <person name="Eaton D."/>
            <person name="Foster J.S."/>
            <person name="Grimaldi C."/>
            <person name="Gu Q."/>
            <person name="Hass P.E."/>
            <person name="Heldens S."/>
            <person name="Huang A."/>
            <person name="Kim H.S."/>
            <person name="Klimowski L."/>
            <person name="Jin Y."/>
            <person name="Johnson S."/>
            <person name="Lee J."/>
            <person name="Lewis L."/>
            <person name="Liao D."/>
            <person name="Mark M.R."/>
            <person name="Robbie E."/>
            <person name="Sanchez C."/>
            <person name="Schoenfeld J."/>
            <person name="Seshagiri S."/>
            <person name="Simmons L."/>
            <person name="Singh J."/>
            <person name="Smith V."/>
            <person name="Stinson J."/>
            <person name="Vagts A."/>
            <person name="Vandlen R.L."/>
            <person name="Watanabe C."/>
            <person name="Wieand D."/>
            <person name="Woods K."/>
            <person name="Xie M.-H."/>
            <person name="Yansura D.G."/>
            <person name="Yi S."/>
            <person name="Yu G."/>
            <person name="Yuan J."/>
            <person name="Zhang M."/>
            <person name="Zhang Z."/>
            <person name="Goddard A.D."/>
            <person name="Wood W.I."/>
            <person name="Godowski P.J."/>
            <person name="Gray A.M."/>
        </authorList>
    </citation>
    <scope>NUCLEOTIDE SEQUENCE [LARGE SCALE MRNA] (ISOFORM 1)</scope>
    <scope>VARIANT TYR-522</scope>
</reference>
<reference key="5">
    <citation type="journal article" date="2004" name="Nat. Genet.">
        <title>Complete sequencing and characterization of 21,243 full-length human cDNAs.</title>
        <authorList>
            <person name="Ota T."/>
            <person name="Suzuki Y."/>
            <person name="Nishikawa T."/>
            <person name="Otsuki T."/>
            <person name="Sugiyama T."/>
            <person name="Irie R."/>
            <person name="Wakamatsu A."/>
            <person name="Hayashi K."/>
            <person name="Sato H."/>
            <person name="Nagai K."/>
            <person name="Kimura K."/>
            <person name="Makita H."/>
            <person name="Sekine M."/>
            <person name="Obayashi M."/>
            <person name="Nishi T."/>
            <person name="Shibahara T."/>
            <person name="Tanaka T."/>
            <person name="Ishii S."/>
            <person name="Yamamoto J."/>
            <person name="Saito K."/>
            <person name="Kawai Y."/>
            <person name="Isono Y."/>
            <person name="Nakamura Y."/>
            <person name="Nagahari K."/>
            <person name="Murakami K."/>
            <person name="Yasuda T."/>
            <person name="Iwayanagi T."/>
            <person name="Wagatsuma M."/>
            <person name="Shiratori A."/>
            <person name="Sudo H."/>
            <person name="Hosoiri T."/>
            <person name="Kaku Y."/>
            <person name="Kodaira H."/>
            <person name="Kondo H."/>
            <person name="Sugawara M."/>
            <person name="Takahashi M."/>
            <person name="Kanda K."/>
            <person name="Yokoi T."/>
            <person name="Furuya T."/>
            <person name="Kikkawa E."/>
            <person name="Omura Y."/>
            <person name="Abe K."/>
            <person name="Kamihara K."/>
            <person name="Katsuta N."/>
            <person name="Sato K."/>
            <person name="Tanikawa M."/>
            <person name="Yamazaki M."/>
            <person name="Ninomiya K."/>
            <person name="Ishibashi T."/>
            <person name="Yamashita H."/>
            <person name="Murakawa K."/>
            <person name="Fujimori K."/>
            <person name="Tanai H."/>
            <person name="Kimata M."/>
            <person name="Watanabe M."/>
            <person name="Hiraoka S."/>
            <person name="Chiba Y."/>
            <person name="Ishida S."/>
            <person name="Ono Y."/>
            <person name="Takiguchi S."/>
            <person name="Watanabe S."/>
            <person name="Yosida M."/>
            <person name="Hotuta T."/>
            <person name="Kusano J."/>
            <person name="Kanehori K."/>
            <person name="Takahashi-Fujii A."/>
            <person name="Hara H."/>
            <person name="Tanase T.-O."/>
            <person name="Nomura Y."/>
            <person name="Togiya S."/>
            <person name="Komai F."/>
            <person name="Hara R."/>
            <person name="Takeuchi K."/>
            <person name="Arita M."/>
            <person name="Imose N."/>
            <person name="Musashino K."/>
            <person name="Yuuki H."/>
            <person name="Oshima A."/>
            <person name="Sasaki N."/>
            <person name="Aotsuka S."/>
            <person name="Yoshikawa Y."/>
            <person name="Matsunawa H."/>
            <person name="Ichihara T."/>
            <person name="Shiohata N."/>
            <person name="Sano S."/>
            <person name="Moriya S."/>
            <person name="Momiyama H."/>
            <person name="Satoh N."/>
            <person name="Takami S."/>
            <person name="Terashima Y."/>
            <person name="Suzuki O."/>
            <person name="Nakagawa S."/>
            <person name="Senoh A."/>
            <person name="Mizoguchi H."/>
            <person name="Goto Y."/>
            <person name="Shimizu F."/>
            <person name="Wakebe H."/>
            <person name="Hishigaki H."/>
            <person name="Watanabe T."/>
            <person name="Sugiyama A."/>
            <person name="Takemoto M."/>
            <person name="Kawakami B."/>
            <person name="Yamazaki M."/>
            <person name="Watanabe K."/>
            <person name="Kumagai A."/>
            <person name="Itakura S."/>
            <person name="Fukuzumi Y."/>
            <person name="Fujimori Y."/>
            <person name="Komiyama M."/>
            <person name="Tashiro H."/>
            <person name="Tanigami A."/>
            <person name="Fujiwara T."/>
            <person name="Ono T."/>
            <person name="Yamada K."/>
            <person name="Fujii Y."/>
            <person name="Ozaki K."/>
            <person name="Hirao M."/>
            <person name="Ohmori Y."/>
            <person name="Kawabata A."/>
            <person name="Hikiji T."/>
            <person name="Kobatake N."/>
            <person name="Inagaki H."/>
            <person name="Ikema Y."/>
            <person name="Okamoto S."/>
            <person name="Okitani R."/>
            <person name="Kawakami T."/>
            <person name="Noguchi S."/>
            <person name="Itoh T."/>
            <person name="Shigeta K."/>
            <person name="Senba T."/>
            <person name="Matsumura K."/>
            <person name="Nakajima Y."/>
            <person name="Mizuno T."/>
            <person name="Morinaga M."/>
            <person name="Sasaki M."/>
            <person name="Togashi T."/>
            <person name="Oyama M."/>
            <person name="Hata H."/>
            <person name="Watanabe M."/>
            <person name="Komatsu T."/>
            <person name="Mizushima-Sugano J."/>
            <person name="Satoh T."/>
            <person name="Shirai Y."/>
            <person name="Takahashi Y."/>
            <person name="Nakagawa K."/>
            <person name="Okumura K."/>
            <person name="Nagase T."/>
            <person name="Nomura N."/>
            <person name="Kikuchi H."/>
            <person name="Masuho Y."/>
            <person name="Yamashita R."/>
            <person name="Nakai K."/>
            <person name="Yada T."/>
            <person name="Nakamura Y."/>
            <person name="Ohara O."/>
            <person name="Isogai T."/>
            <person name="Sugano S."/>
        </authorList>
    </citation>
    <scope>NUCLEOTIDE SEQUENCE [LARGE SCALE MRNA] (ISOFORMS 1 AND 5)</scope>
    <source>
        <tissue>Hepatoma</tissue>
        <tissue>Kidney</tissue>
    </source>
</reference>
<reference key="6">
    <citation type="journal article" date="2001" name="Nature">
        <title>The DNA sequence and comparative analysis of human chromosome 20.</title>
        <authorList>
            <person name="Deloukas P."/>
            <person name="Matthews L.H."/>
            <person name="Ashurst J.L."/>
            <person name="Burton J."/>
            <person name="Gilbert J.G.R."/>
            <person name="Jones M."/>
            <person name="Stavrides G."/>
            <person name="Almeida J.P."/>
            <person name="Babbage A.K."/>
            <person name="Bagguley C.L."/>
            <person name="Bailey J."/>
            <person name="Barlow K.F."/>
            <person name="Bates K.N."/>
            <person name="Beard L.M."/>
            <person name="Beare D.M."/>
            <person name="Beasley O.P."/>
            <person name="Bird C.P."/>
            <person name="Blakey S.E."/>
            <person name="Bridgeman A.M."/>
            <person name="Brown A.J."/>
            <person name="Buck D."/>
            <person name="Burrill W.D."/>
            <person name="Butler A.P."/>
            <person name="Carder C."/>
            <person name="Carter N.P."/>
            <person name="Chapman J.C."/>
            <person name="Clamp M."/>
            <person name="Clark G."/>
            <person name="Clark L.N."/>
            <person name="Clark S.Y."/>
            <person name="Clee C.M."/>
            <person name="Clegg S."/>
            <person name="Cobley V.E."/>
            <person name="Collier R.E."/>
            <person name="Connor R.E."/>
            <person name="Corby N.R."/>
            <person name="Coulson A."/>
            <person name="Coville G.J."/>
            <person name="Deadman R."/>
            <person name="Dhami P.D."/>
            <person name="Dunn M."/>
            <person name="Ellington A.G."/>
            <person name="Frankland J.A."/>
            <person name="Fraser A."/>
            <person name="French L."/>
            <person name="Garner P."/>
            <person name="Grafham D.V."/>
            <person name="Griffiths C."/>
            <person name="Griffiths M.N.D."/>
            <person name="Gwilliam R."/>
            <person name="Hall R.E."/>
            <person name="Hammond S."/>
            <person name="Harley J.L."/>
            <person name="Heath P.D."/>
            <person name="Ho S."/>
            <person name="Holden J.L."/>
            <person name="Howden P.J."/>
            <person name="Huckle E."/>
            <person name="Hunt A.R."/>
            <person name="Hunt S.E."/>
            <person name="Jekosch K."/>
            <person name="Johnson C.M."/>
            <person name="Johnson D."/>
            <person name="Kay M.P."/>
            <person name="Kimberley A.M."/>
            <person name="King A."/>
            <person name="Knights A."/>
            <person name="Laird G.K."/>
            <person name="Lawlor S."/>
            <person name="Lehvaeslaiho M.H."/>
            <person name="Leversha M.A."/>
            <person name="Lloyd C."/>
            <person name="Lloyd D.M."/>
            <person name="Lovell J.D."/>
            <person name="Marsh V.L."/>
            <person name="Martin S.L."/>
            <person name="McConnachie L.J."/>
            <person name="McLay K."/>
            <person name="McMurray A.A."/>
            <person name="Milne S.A."/>
            <person name="Mistry D."/>
            <person name="Moore M.J.F."/>
            <person name="Mullikin J.C."/>
            <person name="Nickerson T."/>
            <person name="Oliver K."/>
            <person name="Parker A."/>
            <person name="Patel R."/>
            <person name="Pearce T.A.V."/>
            <person name="Peck A.I."/>
            <person name="Phillimore B.J.C.T."/>
            <person name="Prathalingam S.R."/>
            <person name="Plumb R.W."/>
            <person name="Ramsay H."/>
            <person name="Rice C.M."/>
            <person name="Ross M.T."/>
            <person name="Scott C.E."/>
            <person name="Sehra H.K."/>
            <person name="Shownkeen R."/>
            <person name="Sims S."/>
            <person name="Skuce C.D."/>
            <person name="Smith M.L."/>
            <person name="Soderlund C."/>
            <person name="Steward C.A."/>
            <person name="Sulston J.E."/>
            <person name="Swann R.M."/>
            <person name="Sycamore N."/>
            <person name="Taylor R."/>
            <person name="Tee L."/>
            <person name="Thomas D.W."/>
            <person name="Thorpe A."/>
            <person name="Tracey A."/>
            <person name="Tromans A.C."/>
            <person name="Vaudin M."/>
            <person name="Wall M."/>
            <person name="Wallis J.M."/>
            <person name="Whitehead S.L."/>
            <person name="Whittaker P."/>
            <person name="Willey D.L."/>
            <person name="Williams L."/>
            <person name="Williams S.A."/>
            <person name="Wilming L."/>
            <person name="Wray P.W."/>
            <person name="Hubbard T."/>
            <person name="Durbin R.M."/>
            <person name="Bentley D.R."/>
            <person name="Beck S."/>
            <person name="Rogers J."/>
        </authorList>
    </citation>
    <scope>NUCLEOTIDE SEQUENCE [LARGE SCALE GENOMIC DNA]</scope>
</reference>
<reference key="7">
    <citation type="submission" date="2005-09" db="EMBL/GenBank/DDBJ databases">
        <authorList>
            <person name="Mural R.J."/>
            <person name="Istrail S."/>
            <person name="Sutton G.G."/>
            <person name="Florea L."/>
            <person name="Halpern A.L."/>
            <person name="Mobarry C.M."/>
            <person name="Lippert R."/>
            <person name="Walenz B."/>
            <person name="Shatkay H."/>
            <person name="Dew I."/>
            <person name="Miller J.R."/>
            <person name="Flanigan M.J."/>
            <person name="Edwards N.J."/>
            <person name="Bolanos R."/>
            <person name="Fasulo D."/>
            <person name="Halldorsson B.V."/>
            <person name="Hannenhalli S."/>
            <person name="Turner R."/>
            <person name="Yooseph S."/>
            <person name="Lu F."/>
            <person name="Nusskern D.R."/>
            <person name="Shue B.C."/>
            <person name="Zheng X.H."/>
            <person name="Zhong F."/>
            <person name="Delcher A.L."/>
            <person name="Huson D.H."/>
            <person name="Kravitz S.A."/>
            <person name="Mouchard L."/>
            <person name="Reinert K."/>
            <person name="Remington K.A."/>
            <person name="Clark A.G."/>
            <person name="Waterman M.S."/>
            <person name="Eichler E.E."/>
            <person name="Adams M.D."/>
            <person name="Hunkapiller M.W."/>
            <person name="Myers E.W."/>
            <person name="Venter J.C."/>
        </authorList>
    </citation>
    <scope>NUCLEOTIDE SEQUENCE [LARGE SCALE GENOMIC DNA]</scope>
</reference>
<reference key="8">
    <citation type="journal article" date="2004" name="Genome Res.">
        <title>The status, quality, and expansion of the NIH full-length cDNA project: the Mammalian Gene Collection (MGC).</title>
        <authorList>
            <consortium name="The MGC Project Team"/>
        </authorList>
    </citation>
    <scope>NUCLEOTIDE SEQUENCE [LARGE SCALE MRNA] (ISOFORM 2)</scope>
    <source>
        <tissue>Kidney</tissue>
    </source>
</reference>
<reference key="9">
    <citation type="journal article" date="2007" name="BMC Genomics">
        <title>The full-ORF clone resource of the German cDNA consortium.</title>
        <authorList>
            <person name="Bechtel S."/>
            <person name="Rosenfelder H."/>
            <person name="Duda A."/>
            <person name="Schmidt C.P."/>
            <person name="Ernst U."/>
            <person name="Wellenreuther R."/>
            <person name="Mehrle A."/>
            <person name="Schuster C."/>
            <person name="Bahr A."/>
            <person name="Bloecker H."/>
            <person name="Heubner D."/>
            <person name="Hoerlein A."/>
            <person name="Michel G."/>
            <person name="Wedler H."/>
            <person name="Koehrer K."/>
            <person name="Ottenwaelder B."/>
            <person name="Poustka A."/>
            <person name="Wiemann S."/>
            <person name="Schupp I."/>
        </authorList>
    </citation>
    <scope>NUCLEOTIDE SEQUENCE [LARGE SCALE MRNA] OF 144-555 (ISOFORM 1)</scope>
    <source>
        <tissue>Amygdala</tissue>
    </source>
</reference>
<reference key="10">
    <citation type="journal article" date="2003" name="Biochem. Biophys. Res. Commun.">
        <title>Properties of purified recombinant human polyamine oxidase, PAOh1/SMO.</title>
        <authorList>
            <person name="Wang Y."/>
            <person name="Murray-Stewart T."/>
            <person name="Devereux W."/>
            <person name="Hacker A."/>
            <person name="Frydman B."/>
            <person name="Woster P.M."/>
            <person name="Casero R.A. Jr."/>
        </authorList>
    </citation>
    <scope>CHARACTERIZATION (ISOFORM 1)</scope>
</reference>
<reference key="11">
    <citation type="journal article" date="2002" name="Biochem. J.">
        <title>Identification and characterization of a novel flavin-containing spermine oxidase of mammalian cell origin.</title>
        <authorList>
            <person name="Vujcic S."/>
            <person name="Diegelman P."/>
            <person name="Bacchi C.J."/>
            <person name="Kramer D.L."/>
            <person name="Porter C.W."/>
        </authorList>
    </citation>
    <scope>CATALYTIC ACTIVITY</scope>
    <scope>MUTAGENESIS OF CYS-320</scope>
</reference>
<reference key="12">
    <citation type="journal article" date="2004" name="Amino Acids">
        <title>Catabolism of polyamines.</title>
        <authorList>
            <person name="Seiler N."/>
        </authorList>
    </citation>
    <scope>REVIEW</scope>
</reference>
<reference key="13">
    <citation type="journal article" date="2006" name="Science">
        <title>The consensus coding sequences of human breast and colorectal cancers.</title>
        <authorList>
            <person name="Sjoeblom T."/>
            <person name="Jones S."/>
            <person name="Wood L.D."/>
            <person name="Parsons D.W."/>
            <person name="Lin J."/>
            <person name="Barber T.D."/>
            <person name="Mandelker D."/>
            <person name="Leary R.J."/>
            <person name="Ptak J."/>
            <person name="Silliman N."/>
            <person name="Szabo S."/>
            <person name="Buckhaults P."/>
            <person name="Farrell C."/>
            <person name="Meeh P."/>
            <person name="Markowitz S.D."/>
            <person name="Willis J."/>
            <person name="Dawson D."/>
            <person name="Willson J.K.V."/>
            <person name="Gazdar A.F."/>
            <person name="Hartigan J."/>
            <person name="Wu L."/>
            <person name="Liu C."/>
            <person name="Parmigiani G."/>
            <person name="Park B.H."/>
            <person name="Bachman K.E."/>
            <person name="Papadopoulos N."/>
            <person name="Vogelstein B."/>
            <person name="Kinzler K.W."/>
            <person name="Velculescu V.E."/>
        </authorList>
    </citation>
    <scope>VARIANT [LARGE SCALE ANALYSIS] LYS-340</scope>
</reference>